<keyword id="KW-0963">Cytoplasm</keyword>
<keyword id="KW-0819">tRNA processing</keyword>
<comment type="function">
    <text evidence="1">Part of a sulfur-relay system required for 2-thiolation of 5-methylaminomethyl-2-thiouridine (mnm(5)s(2)U) at tRNA wobble positions.</text>
</comment>
<comment type="subunit">
    <text evidence="1">Heterohexamer, formed by a dimer of trimers. The hexameric TusBCD complex contains 2 copies each of TusB, TusC and TusD. The TusBCD complex interacts with TusE.</text>
</comment>
<comment type="subcellular location">
    <subcellularLocation>
        <location evidence="1">Cytoplasm</location>
    </subcellularLocation>
</comment>
<comment type="similarity">
    <text evidence="1">Belongs to the DsrF/TusC family.</text>
</comment>
<feature type="chain" id="PRO_1000122848" description="Protein TusC">
    <location>
        <begin position="1"/>
        <end position="118"/>
    </location>
</feature>
<sequence length="118" mass="13011">MKRIAFVFSTAPHGSASGREGLDALLATSALTEALGVFFISDGVFQLLPGQKPDAVLARDYIATFKLFDLYDIDQCWICAASLRERGLENVNFVVDATPLEPVALRRELGNYDVILRF</sequence>
<gene>
    <name evidence="1" type="primary">tusC</name>
    <name type="ordered locus">SeHA_C3755</name>
</gene>
<accession>B4TKM5</accession>
<protein>
    <recommendedName>
        <fullName evidence="1">Protein TusC</fullName>
    </recommendedName>
    <alternativeName>
        <fullName evidence="1">tRNA 2-thiouridine synthesizing protein C</fullName>
    </alternativeName>
</protein>
<dbReference type="EMBL" id="CP001120">
    <property type="protein sequence ID" value="ACF70036.1"/>
    <property type="molecule type" value="Genomic_DNA"/>
</dbReference>
<dbReference type="RefSeq" id="WP_000820705.1">
    <property type="nucleotide sequence ID" value="NC_011083.1"/>
</dbReference>
<dbReference type="SMR" id="B4TKM5"/>
<dbReference type="GeneID" id="66757785"/>
<dbReference type="KEGG" id="seh:SeHA_C3755"/>
<dbReference type="HOGENOM" id="CLU_155943_1_0_6"/>
<dbReference type="Proteomes" id="UP000001866">
    <property type="component" value="Chromosome"/>
</dbReference>
<dbReference type="GO" id="GO:0005737">
    <property type="term" value="C:cytoplasm"/>
    <property type="evidence" value="ECO:0007669"/>
    <property type="project" value="UniProtKB-SubCell"/>
</dbReference>
<dbReference type="GO" id="GO:0008033">
    <property type="term" value="P:tRNA processing"/>
    <property type="evidence" value="ECO:0007669"/>
    <property type="project" value="UniProtKB-UniRule"/>
</dbReference>
<dbReference type="Gene3D" id="3.40.1260.10">
    <property type="entry name" value="DsrEFH-like"/>
    <property type="match status" value="1"/>
</dbReference>
<dbReference type="HAMAP" id="MF_00389">
    <property type="entry name" value="Thiourid_synth_C"/>
    <property type="match status" value="1"/>
</dbReference>
<dbReference type="InterPro" id="IPR027396">
    <property type="entry name" value="DsrEFH-like"/>
</dbReference>
<dbReference type="InterPro" id="IPR003787">
    <property type="entry name" value="Sulphur_relay_DsrE/F-like"/>
</dbReference>
<dbReference type="InterPro" id="IPR037450">
    <property type="entry name" value="Sulphur_relay_TusC"/>
</dbReference>
<dbReference type="InterPro" id="IPR017462">
    <property type="entry name" value="Sulphur_relay_TusC/DsrF"/>
</dbReference>
<dbReference type="NCBIfam" id="NF001238">
    <property type="entry name" value="PRK00211.1"/>
    <property type="match status" value="1"/>
</dbReference>
<dbReference type="NCBIfam" id="TIGR03010">
    <property type="entry name" value="sulf_tusC_dsrF"/>
    <property type="match status" value="1"/>
</dbReference>
<dbReference type="PANTHER" id="PTHR38780">
    <property type="entry name" value="PROTEIN TUSC"/>
    <property type="match status" value="1"/>
</dbReference>
<dbReference type="PANTHER" id="PTHR38780:SF1">
    <property type="entry name" value="PROTEIN TUSC"/>
    <property type="match status" value="1"/>
</dbReference>
<dbReference type="Pfam" id="PF02635">
    <property type="entry name" value="DsrE"/>
    <property type="match status" value="1"/>
</dbReference>
<dbReference type="SUPFAM" id="SSF75169">
    <property type="entry name" value="DsrEFH-like"/>
    <property type="match status" value="1"/>
</dbReference>
<organism>
    <name type="scientific">Salmonella heidelberg (strain SL476)</name>
    <dbReference type="NCBI Taxonomy" id="454169"/>
    <lineage>
        <taxon>Bacteria</taxon>
        <taxon>Pseudomonadati</taxon>
        <taxon>Pseudomonadota</taxon>
        <taxon>Gammaproteobacteria</taxon>
        <taxon>Enterobacterales</taxon>
        <taxon>Enterobacteriaceae</taxon>
        <taxon>Salmonella</taxon>
    </lineage>
</organism>
<name>TUSC_SALHS</name>
<reference key="1">
    <citation type="journal article" date="2011" name="J. Bacteriol.">
        <title>Comparative genomics of 28 Salmonella enterica isolates: evidence for CRISPR-mediated adaptive sublineage evolution.</title>
        <authorList>
            <person name="Fricke W.F."/>
            <person name="Mammel M.K."/>
            <person name="McDermott P.F."/>
            <person name="Tartera C."/>
            <person name="White D.G."/>
            <person name="Leclerc J.E."/>
            <person name="Ravel J."/>
            <person name="Cebula T.A."/>
        </authorList>
    </citation>
    <scope>NUCLEOTIDE SEQUENCE [LARGE SCALE GENOMIC DNA]</scope>
    <source>
        <strain>SL476</strain>
    </source>
</reference>
<evidence type="ECO:0000255" key="1">
    <source>
        <dbReference type="HAMAP-Rule" id="MF_00389"/>
    </source>
</evidence>
<proteinExistence type="inferred from homology"/>